<proteinExistence type="evidence at transcript level"/>
<reference key="1">
    <citation type="journal article" date="2009" name="Genome Biol.">
        <title>A whole-genome assembly of the domestic cow, Bos taurus.</title>
        <authorList>
            <person name="Zimin A.V."/>
            <person name="Delcher A.L."/>
            <person name="Florea L."/>
            <person name="Kelley D.R."/>
            <person name="Schatz M.C."/>
            <person name="Puiu D."/>
            <person name="Hanrahan F."/>
            <person name="Pertea G."/>
            <person name="Van Tassell C.P."/>
            <person name="Sonstegard T.S."/>
            <person name="Marcais G."/>
            <person name="Roberts M."/>
            <person name="Subramanian P."/>
            <person name="Yorke J.A."/>
            <person name="Salzberg S.L."/>
        </authorList>
    </citation>
    <scope>NUCLEOTIDE SEQUENCE [LARGE SCALE GENOMIC DNA]</scope>
    <source>
        <strain>Hereford</strain>
    </source>
</reference>
<reference key="2">
    <citation type="submission" date="2005-09" db="EMBL/GenBank/DDBJ databases">
        <authorList>
            <consortium name="NIH - Mammalian Gene Collection (MGC) project"/>
        </authorList>
    </citation>
    <scope>NUCLEOTIDE SEQUENCE [LARGE SCALE MRNA]</scope>
    <source>
        <strain>Crossbred X Angus</strain>
        <tissue>Liver</tissue>
    </source>
</reference>
<dbReference type="EC" id="3.2.2.-"/>
<dbReference type="EC" id="4.2.99.18"/>
<dbReference type="EMBL" id="DAAA02060028">
    <property type="status" value="NOT_ANNOTATED_CDS"/>
    <property type="molecule type" value="Genomic_DNA"/>
</dbReference>
<dbReference type="EMBL" id="BC105168">
    <property type="protein sequence ID" value="AAI05169.1"/>
    <property type="molecule type" value="mRNA"/>
</dbReference>
<dbReference type="RefSeq" id="NP_001029662.1">
    <property type="nucleotide sequence ID" value="NM_001034490.2"/>
</dbReference>
<dbReference type="SMR" id="Q3MHN7"/>
<dbReference type="FunCoup" id="Q3MHN7">
    <property type="interactions" value="546"/>
</dbReference>
<dbReference type="STRING" id="9913.ENSBTAP00000061910"/>
<dbReference type="PaxDb" id="9913-ENSBTAP00000007661"/>
<dbReference type="GeneID" id="515343"/>
<dbReference type="KEGG" id="bta:515343"/>
<dbReference type="CTD" id="55247"/>
<dbReference type="eggNOG" id="ENOG502QWRN">
    <property type="taxonomic scope" value="Eukaryota"/>
</dbReference>
<dbReference type="HOGENOM" id="CLU_482283_0_0_1"/>
<dbReference type="InParanoid" id="Q3MHN7"/>
<dbReference type="OrthoDB" id="498125at2759"/>
<dbReference type="TreeFam" id="TF331502"/>
<dbReference type="Proteomes" id="UP000009136">
    <property type="component" value="Unplaced"/>
</dbReference>
<dbReference type="GO" id="GO:0005694">
    <property type="term" value="C:chromosome"/>
    <property type="evidence" value="ECO:0007669"/>
    <property type="project" value="UniProtKB-SubCell"/>
</dbReference>
<dbReference type="GO" id="GO:0005634">
    <property type="term" value="C:nucleus"/>
    <property type="evidence" value="ECO:0000250"/>
    <property type="project" value="UniProtKB"/>
</dbReference>
<dbReference type="GO" id="GO:0000405">
    <property type="term" value="F:bubble DNA binding"/>
    <property type="evidence" value="ECO:0000250"/>
    <property type="project" value="UniProtKB"/>
</dbReference>
<dbReference type="GO" id="GO:0140078">
    <property type="term" value="F:class I DNA-(apurinic or apyrimidinic site) endonuclease activity"/>
    <property type="evidence" value="ECO:0007669"/>
    <property type="project" value="UniProtKB-EC"/>
</dbReference>
<dbReference type="GO" id="GO:0003684">
    <property type="term" value="F:damaged DNA binding"/>
    <property type="evidence" value="ECO:0000250"/>
    <property type="project" value="UniProtKB"/>
</dbReference>
<dbReference type="GO" id="GO:0019104">
    <property type="term" value="F:DNA N-glycosylase activity"/>
    <property type="evidence" value="ECO:0000250"/>
    <property type="project" value="UniProtKB"/>
</dbReference>
<dbReference type="GO" id="GO:0003906">
    <property type="term" value="F:DNA-(apurinic or apyrimidinic site) endonuclease activity"/>
    <property type="evidence" value="ECO:0000250"/>
    <property type="project" value="UniProtKB"/>
</dbReference>
<dbReference type="GO" id="GO:0003690">
    <property type="term" value="F:double-stranded DNA binding"/>
    <property type="evidence" value="ECO:0000250"/>
    <property type="project" value="UniProtKB"/>
</dbReference>
<dbReference type="GO" id="GO:1904931">
    <property type="term" value="F:MCM complex binding"/>
    <property type="evidence" value="ECO:0000250"/>
    <property type="project" value="UniProtKB"/>
</dbReference>
<dbReference type="GO" id="GO:0003697">
    <property type="term" value="F:single-stranded DNA binding"/>
    <property type="evidence" value="ECO:0000250"/>
    <property type="project" value="UniProtKB"/>
</dbReference>
<dbReference type="GO" id="GO:0008270">
    <property type="term" value="F:zinc ion binding"/>
    <property type="evidence" value="ECO:0007669"/>
    <property type="project" value="UniProtKB-KW"/>
</dbReference>
<dbReference type="GO" id="GO:0006284">
    <property type="term" value="P:base-excision repair"/>
    <property type="evidence" value="ECO:0000250"/>
    <property type="project" value="UniProtKB"/>
</dbReference>
<dbReference type="GO" id="GO:0036297">
    <property type="term" value="P:interstrand cross-link repair"/>
    <property type="evidence" value="ECO:0000250"/>
    <property type="project" value="UniProtKB"/>
</dbReference>
<dbReference type="CDD" id="cd08969">
    <property type="entry name" value="MeNeil3_N"/>
    <property type="match status" value="1"/>
</dbReference>
<dbReference type="FunFam" id="2.30.30.380:FF:000017">
    <property type="entry name" value="Nei like DNA glycosylase 3"/>
    <property type="match status" value="1"/>
</dbReference>
<dbReference type="FunFam" id="3.20.190.10:FF:000005">
    <property type="entry name" value="Nei like DNA glycosylase 3"/>
    <property type="match status" value="1"/>
</dbReference>
<dbReference type="FunFam" id="1.10.8.50:FF:000008">
    <property type="entry name" value="Nei-like DNA glycosylase 3"/>
    <property type="match status" value="1"/>
</dbReference>
<dbReference type="Gene3D" id="1.10.8.50">
    <property type="match status" value="1"/>
</dbReference>
<dbReference type="Gene3D" id="3.20.190.10">
    <property type="entry name" value="MutM-like, N-terminal"/>
    <property type="match status" value="1"/>
</dbReference>
<dbReference type="Gene3D" id="2.30.30.380">
    <property type="entry name" value="Zn-finger domain of Sec23/24"/>
    <property type="match status" value="1"/>
</dbReference>
<dbReference type="InterPro" id="IPR015886">
    <property type="entry name" value="DNA_glyclase/AP_lyase_DNA-bd"/>
</dbReference>
<dbReference type="InterPro" id="IPR015887">
    <property type="entry name" value="DNA_glyclase_Znf_dom_DNA_BS"/>
</dbReference>
<dbReference type="InterPro" id="IPR012319">
    <property type="entry name" value="FPG_cat"/>
</dbReference>
<dbReference type="InterPro" id="IPR035937">
    <property type="entry name" value="MutM-like_N-ter"/>
</dbReference>
<dbReference type="InterPro" id="IPR010979">
    <property type="entry name" value="Ribosomal_uS13-like_H2TH"/>
</dbReference>
<dbReference type="InterPro" id="IPR000214">
    <property type="entry name" value="Znf_DNA_glyclase/AP_lyase"/>
</dbReference>
<dbReference type="InterPro" id="IPR010666">
    <property type="entry name" value="Znf_GRF"/>
</dbReference>
<dbReference type="InterPro" id="IPR001876">
    <property type="entry name" value="Znf_RanBP2"/>
</dbReference>
<dbReference type="InterPro" id="IPR036443">
    <property type="entry name" value="Znf_RanBP2_sf"/>
</dbReference>
<dbReference type="PANTHER" id="PTHR22993:SF10">
    <property type="entry name" value="ENDONUCLEASE 8-LIKE 3"/>
    <property type="match status" value="1"/>
</dbReference>
<dbReference type="PANTHER" id="PTHR22993">
    <property type="entry name" value="FORMAMIDOPYRIMIDINE-DNA GLYCOSYLASE"/>
    <property type="match status" value="1"/>
</dbReference>
<dbReference type="Pfam" id="PF06831">
    <property type="entry name" value="H2TH"/>
    <property type="match status" value="1"/>
</dbReference>
<dbReference type="Pfam" id="PF06839">
    <property type="entry name" value="Zn_ribbon_GRF"/>
    <property type="match status" value="2"/>
</dbReference>
<dbReference type="Pfam" id="PF00641">
    <property type="entry name" value="Zn_ribbon_RanBP"/>
    <property type="match status" value="1"/>
</dbReference>
<dbReference type="SMART" id="SM01232">
    <property type="entry name" value="H2TH"/>
    <property type="match status" value="1"/>
</dbReference>
<dbReference type="SMART" id="SM00547">
    <property type="entry name" value="ZnF_RBZ"/>
    <property type="match status" value="1"/>
</dbReference>
<dbReference type="SUPFAM" id="SSF81624">
    <property type="entry name" value="N-terminal domain of MutM-like DNA repair proteins"/>
    <property type="match status" value="1"/>
</dbReference>
<dbReference type="SUPFAM" id="SSF90209">
    <property type="entry name" value="Ran binding protein zinc finger-like"/>
    <property type="match status" value="1"/>
</dbReference>
<dbReference type="SUPFAM" id="SSF46946">
    <property type="entry name" value="S13-like H2TH domain"/>
    <property type="match status" value="1"/>
</dbReference>
<dbReference type="PROSITE" id="PS51068">
    <property type="entry name" value="FPG_CAT"/>
    <property type="match status" value="1"/>
</dbReference>
<dbReference type="PROSITE" id="PS01242">
    <property type="entry name" value="ZF_FPG_1"/>
    <property type="match status" value="1"/>
</dbReference>
<dbReference type="PROSITE" id="PS51066">
    <property type="entry name" value="ZF_FPG_2"/>
    <property type="match status" value="1"/>
</dbReference>
<dbReference type="PROSITE" id="PS51999">
    <property type="entry name" value="ZF_GRF"/>
    <property type="match status" value="2"/>
</dbReference>
<dbReference type="PROSITE" id="PS01358">
    <property type="entry name" value="ZF_RANBP2_1"/>
    <property type="match status" value="1"/>
</dbReference>
<dbReference type="PROSITE" id="PS50199">
    <property type="entry name" value="ZF_RANBP2_2"/>
    <property type="match status" value="1"/>
</dbReference>
<evidence type="ECO:0000250" key="1"/>
<evidence type="ECO:0000250" key="2">
    <source>
        <dbReference type="UniProtKB" id="A0A1L8HU22"/>
    </source>
</evidence>
<evidence type="ECO:0000250" key="3">
    <source>
        <dbReference type="UniProtKB" id="Q8K203"/>
    </source>
</evidence>
<evidence type="ECO:0000250" key="4">
    <source>
        <dbReference type="UniProtKB" id="Q8TAT5"/>
    </source>
</evidence>
<evidence type="ECO:0000255" key="5">
    <source>
        <dbReference type="PROSITE-ProRule" id="PRU00322"/>
    </source>
</evidence>
<evidence type="ECO:0000255" key="6">
    <source>
        <dbReference type="PROSITE-ProRule" id="PRU00391"/>
    </source>
</evidence>
<evidence type="ECO:0000255" key="7">
    <source>
        <dbReference type="PROSITE-ProRule" id="PRU00392"/>
    </source>
</evidence>
<evidence type="ECO:0000255" key="8">
    <source>
        <dbReference type="PROSITE-ProRule" id="PRU01343"/>
    </source>
</evidence>
<evidence type="ECO:0000256" key="9">
    <source>
        <dbReference type="SAM" id="MobiDB-lite"/>
    </source>
</evidence>
<evidence type="ECO:0000305" key="10"/>
<accession>Q3MHN7</accession>
<accession>F1N383</accession>
<sequence>MVEGPGCTLNGEKIRARVRPGQAVTDVRGRALQGLGGPGSPPAAPGPMGTSQAAALNNNKNSSQDFLRLFNGHGYSGVETLGKELFMYFGPKALRIHFGMKGSLVINPLESKNKNGVSPVFEVQLTKDLICFFDSSVEIRNSTESQQRIRVMEELDVCSPRFSFSRAESEVKKQKGRMLCDVLMDQKVLPGVGNIIKNEALFDSGFHPSVKVCQLTDEQIHHLVKMIRNFSILFYRCCKVGSALSKHYKVYKRPNCGQCCCKITVCRLGENNRMTYFCPHCQKENPQHVDIRMLPVRNTTVNWPSSRERHLMDCVAQKSEEQWTCEVCTLINKLSSKTCDACLTSRPADSVLRNEGNPIVFNNLMKYPCNSFGKSKAKVKINRKTAFGTTTLVLTDFSNKHSALEREESHSHIPDGEFPSPPPNVCGSDTLNTSKERTNCRSQPSDKVNISPVVCSQYKLFSPAHKKLKTTHYSSPDLKSCNPGFSNSELQSSMTDGPCLLNAGSPRCSKHGRPCALRVVRKSGENKGRHFYACPLAREAQCGFFEWADLSFPFCNHGKRSIMRTVLKIGPNNGKNFFVCPLGKEKQCNFFQWAQNGPGINIIPGC</sequence>
<name>NEIL3_BOVIN</name>
<organism>
    <name type="scientific">Bos taurus</name>
    <name type="common">Bovine</name>
    <dbReference type="NCBI Taxonomy" id="9913"/>
    <lineage>
        <taxon>Eukaryota</taxon>
        <taxon>Metazoa</taxon>
        <taxon>Chordata</taxon>
        <taxon>Craniata</taxon>
        <taxon>Vertebrata</taxon>
        <taxon>Euteleostomi</taxon>
        <taxon>Mammalia</taxon>
        <taxon>Eutheria</taxon>
        <taxon>Laurasiatheria</taxon>
        <taxon>Artiodactyla</taxon>
        <taxon>Ruminantia</taxon>
        <taxon>Pecora</taxon>
        <taxon>Bovidae</taxon>
        <taxon>Bovinae</taxon>
        <taxon>Bos</taxon>
    </lineage>
</organism>
<feature type="chain" id="PRO_0000248634" description="Endonuclease 8-like 3">
    <location>
        <begin position="1"/>
        <end position="606"/>
    </location>
</feature>
<feature type="zinc finger region" description="FPG-type" evidence="6">
    <location>
        <begin position="249"/>
        <end position="283"/>
    </location>
</feature>
<feature type="zinc finger region" description="RanBP2-type" evidence="5">
    <location>
        <begin position="319"/>
        <end position="348"/>
    </location>
</feature>
<feature type="zinc finger region" description="GRF-type 1" evidence="8">
    <location>
        <begin position="508"/>
        <end position="551"/>
    </location>
</feature>
<feature type="zinc finger region" description="GRF-type 2" evidence="8">
    <location>
        <begin position="555"/>
        <end position="597"/>
    </location>
</feature>
<feature type="region of interest" description="Disordered" evidence="9">
    <location>
        <begin position="31"/>
        <end position="51"/>
    </location>
</feature>
<feature type="active site" description="Schiff-base intermediate with DNA; via amino nitrogen" evidence="7">
    <location>
        <position position="2"/>
    </location>
</feature>
<feature type="binding site" evidence="1">
    <location>
        <position position="194"/>
    </location>
    <ligand>
        <name>DNA</name>
        <dbReference type="ChEBI" id="CHEBI:16991"/>
    </ligand>
</feature>
<feature type="binding site" evidence="1">
    <location>
        <position position="273"/>
    </location>
    <ligand>
        <name>DNA</name>
        <dbReference type="ChEBI" id="CHEBI:16991"/>
    </ligand>
</feature>
<feature type="binding site" evidence="8">
    <location>
        <position position="508"/>
    </location>
    <ligand>
        <name>Zn(2+)</name>
        <dbReference type="ChEBI" id="CHEBI:29105"/>
        <label>1</label>
    </ligand>
</feature>
<feature type="binding site" evidence="8">
    <location>
        <position position="511"/>
    </location>
    <ligand>
        <name>Zn(2+)</name>
        <dbReference type="ChEBI" id="CHEBI:29105"/>
        <label>1</label>
    </ligand>
</feature>
<feature type="binding site" evidence="8">
    <location>
        <position position="534"/>
    </location>
    <ligand>
        <name>Zn(2+)</name>
        <dbReference type="ChEBI" id="CHEBI:29105"/>
        <label>1</label>
    </ligand>
</feature>
<feature type="binding site" evidence="8">
    <location>
        <position position="542"/>
    </location>
    <ligand>
        <name>Zn(2+)</name>
        <dbReference type="ChEBI" id="CHEBI:29105"/>
        <label>1</label>
    </ligand>
</feature>
<feature type="binding site" evidence="8">
    <location>
        <position position="555"/>
    </location>
    <ligand>
        <name>Zn(2+)</name>
        <dbReference type="ChEBI" id="CHEBI:29105"/>
        <label>2</label>
    </ligand>
</feature>
<feature type="binding site" evidence="8">
    <location>
        <position position="557"/>
    </location>
    <ligand>
        <name>Zn(2+)</name>
        <dbReference type="ChEBI" id="CHEBI:29105"/>
        <label>2</label>
    </ligand>
</feature>
<feature type="binding site" evidence="8">
    <location>
        <position position="580"/>
    </location>
    <ligand>
        <name>Zn(2+)</name>
        <dbReference type="ChEBI" id="CHEBI:29105"/>
        <label>2</label>
    </ligand>
</feature>
<feature type="binding site" evidence="8">
    <location>
        <position position="588"/>
    </location>
    <ligand>
        <name>Zn(2+)</name>
        <dbReference type="ChEBI" id="CHEBI:29105"/>
        <label>2</label>
    </ligand>
</feature>
<feature type="site" description="Important for monofunctional glycosylase activity" evidence="1">
    <location>
        <position position="2"/>
    </location>
</feature>
<feature type="site" description="Required for glycosylase activity" evidence="1">
    <location>
        <position position="83"/>
    </location>
</feature>
<feature type="modified residue" description="Phosphoserine" evidence="4">
    <location>
        <position position="451"/>
    </location>
</feature>
<feature type="sequence conflict" description="In Ref. 2; AAI05169." evidence="10" ref="2">
    <original>Q</original>
    <variation>H</variation>
    <location>
        <position position="64"/>
    </location>
</feature>
<protein>
    <recommendedName>
        <fullName>Endonuclease 8-like 3</fullName>
        <ecNumber>3.2.2.-</ecNumber>
        <ecNumber>4.2.99.18</ecNumber>
    </recommendedName>
    <alternativeName>
        <fullName>DNA glycosylase/AP lyase Neil3</fullName>
    </alternativeName>
    <alternativeName>
        <fullName>Endonuclease VIII-like 3</fullName>
    </alternativeName>
    <alternativeName>
        <fullName>Nei-like protein 3</fullName>
    </alternativeName>
</protein>
<comment type="function">
    <text evidence="2 3">DNA glycosylase which prefers single-stranded DNA (ssDNA), or partially ssDNA structures such as bubble and fork structures, to double-stranded DNA (dsDNA) (By similarity). Mediates interstrand cross-link repair in response to replication stress: acts by mediating DNA glycosylase activity, cleaving one of the two N-glycosyl bonds comprising the interstrand cross-link, which avoids the formation of a double-strand break but generates an abasic site that is bypassed by translesion synthesis polymerases (By similarity). In vitro, displays strong glycosylase activity towards the hydantoin lesions spiroiminodihydantoin (Sp) and guanidinohydantoin (Gh) in both ssDNA and dsDNA; also recognizes FapyA, FapyG, 5-OHU, 5-OHC, 5-OHMH, Tg and 8-oxoA lesions in ssDNA. No activity on 8-oxoG detected. Also shows weak DNA-(apurinic or apyrimidinic site) lyase activity. In vivo, appears to be the primary enzyme involved in removing Sp and Gh from ssDNA in neonatal tissues (By similarity).</text>
</comment>
<comment type="catalytic activity">
    <reaction evidence="7">
        <text>2'-deoxyribonucleotide-(2'-deoxyribose 5'-phosphate)-2'-deoxyribonucleotide-DNA = a 3'-end 2'-deoxyribonucleotide-(2,3-dehydro-2,3-deoxyribose 5'-phosphate)-DNA + a 5'-end 5'-phospho-2'-deoxyribonucleoside-DNA + H(+)</text>
        <dbReference type="Rhea" id="RHEA:66592"/>
        <dbReference type="Rhea" id="RHEA-COMP:13180"/>
        <dbReference type="Rhea" id="RHEA-COMP:16897"/>
        <dbReference type="Rhea" id="RHEA-COMP:17067"/>
        <dbReference type="ChEBI" id="CHEBI:15378"/>
        <dbReference type="ChEBI" id="CHEBI:136412"/>
        <dbReference type="ChEBI" id="CHEBI:157695"/>
        <dbReference type="ChEBI" id="CHEBI:167181"/>
        <dbReference type="EC" id="4.2.99.18"/>
    </reaction>
</comment>
<comment type="subcellular location">
    <subcellularLocation>
        <location evidence="4">Nucleus</location>
    </subcellularLocation>
    <subcellularLocation>
        <location evidence="2">Chromosome</location>
    </subcellularLocation>
    <text evidence="2">Recruited to replication stress sites via interaction with ubiquitinated CMG helicase.</text>
</comment>
<comment type="domain">
    <text evidence="1">The N-terminal region (2-283) contains the glycosylase and lyase activities.</text>
</comment>
<comment type="domain">
    <text evidence="2">The RanBP2-type zinc-finger, also named NZF zinc finger, recognizes and binds ubiquitinated CMG helicase complex. The GRF-type zinc-fingers recognize single-stranded DNA (ssDNA), possibly on the lagging strand template.</text>
</comment>
<comment type="similarity">
    <text evidence="7">Belongs to the FPG family.</text>
</comment>
<keyword id="KW-0158">Chromosome</keyword>
<keyword id="KW-0227">DNA damage</keyword>
<keyword id="KW-0234">DNA repair</keyword>
<keyword id="KW-0238">DNA-binding</keyword>
<keyword id="KW-0326">Glycosidase</keyword>
<keyword id="KW-0378">Hydrolase</keyword>
<keyword id="KW-0456">Lyase</keyword>
<keyword id="KW-0479">Metal-binding</keyword>
<keyword id="KW-0511">Multifunctional enzyme</keyword>
<keyword id="KW-0539">Nucleus</keyword>
<keyword id="KW-0597">Phosphoprotein</keyword>
<keyword id="KW-1185">Reference proteome</keyword>
<keyword id="KW-0677">Repeat</keyword>
<keyword id="KW-0862">Zinc</keyword>
<keyword id="KW-0863">Zinc-finger</keyword>
<gene>
    <name type="primary">NEIL3</name>
</gene>